<organism>
    <name type="scientific">Methanospirillum hungatei JF-1 (strain ATCC 27890 / DSM 864 / NBRC 100397 / JF-1)</name>
    <dbReference type="NCBI Taxonomy" id="323259"/>
    <lineage>
        <taxon>Archaea</taxon>
        <taxon>Methanobacteriati</taxon>
        <taxon>Methanobacteriota</taxon>
        <taxon>Stenosarchaea group</taxon>
        <taxon>Methanomicrobia</taxon>
        <taxon>Methanomicrobiales</taxon>
        <taxon>Methanospirillaceae</taxon>
        <taxon>Methanospirillum</taxon>
    </lineage>
</organism>
<accession>Q2FLB8</accession>
<feature type="chain" id="PRO_0000252965" description="Fluoride-specific ion channel FluC 1">
    <location>
        <begin position="1"/>
        <end position="140"/>
    </location>
</feature>
<feature type="transmembrane region" description="Helical" evidence="1">
    <location>
        <begin position="45"/>
        <end position="65"/>
    </location>
</feature>
<feature type="transmembrane region" description="Helical" evidence="1">
    <location>
        <begin position="82"/>
        <end position="102"/>
    </location>
</feature>
<feature type="transmembrane region" description="Helical" evidence="1">
    <location>
        <begin position="106"/>
        <end position="126"/>
    </location>
</feature>
<feature type="binding site" evidence="1">
    <location>
        <position position="89"/>
    </location>
    <ligand>
        <name>Na(+)</name>
        <dbReference type="ChEBI" id="CHEBI:29101"/>
        <note>structural</note>
    </ligand>
</feature>
<feature type="binding site" evidence="1">
    <location>
        <position position="92"/>
    </location>
    <ligand>
        <name>Na(+)</name>
        <dbReference type="ChEBI" id="CHEBI:29101"/>
        <note>structural</note>
    </ligand>
</feature>
<proteinExistence type="inferred from homology"/>
<name>FLUC1_METHJ</name>
<reference key="1">
    <citation type="journal article" date="2016" name="Stand. Genomic Sci.">
        <title>Complete genome sequence of Methanospirillum hungatei type strain JF1.</title>
        <authorList>
            <person name="Gunsalus R.P."/>
            <person name="Cook L.E."/>
            <person name="Crable B."/>
            <person name="Rohlin L."/>
            <person name="McDonald E."/>
            <person name="Mouttaki H."/>
            <person name="Sieber J.R."/>
            <person name="Poweleit N."/>
            <person name="Zhou H."/>
            <person name="Lapidus A.L."/>
            <person name="Daligault H.E."/>
            <person name="Land M."/>
            <person name="Gilna P."/>
            <person name="Ivanova N."/>
            <person name="Kyrpides N."/>
            <person name="Culley D.E."/>
            <person name="McInerney M.J."/>
        </authorList>
    </citation>
    <scope>NUCLEOTIDE SEQUENCE [LARGE SCALE GENOMIC DNA]</scope>
    <source>
        <strain>ATCC 27890 / DSM 864 / NBRC 100397 / JF-1</strain>
    </source>
</reference>
<comment type="function">
    <text evidence="1">Fluoride-specific ion channel. Important for reducing fluoride concentration in the cell, thus reducing its toxicity.</text>
</comment>
<comment type="catalytic activity">
    <reaction evidence="1">
        <text>fluoride(in) = fluoride(out)</text>
        <dbReference type="Rhea" id="RHEA:76159"/>
        <dbReference type="ChEBI" id="CHEBI:17051"/>
    </reaction>
    <physiologicalReaction direction="left-to-right" evidence="1">
        <dbReference type="Rhea" id="RHEA:76160"/>
    </physiologicalReaction>
</comment>
<comment type="activity regulation">
    <text evidence="1">Na(+) is not transported, but it plays an essential structural role and its presence is essential for fluoride channel function.</text>
</comment>
<comment type="subcellular location">
    <subcellularLocation>
        <location evidence="1">Cell membrane</location>
        <topology evidence="1">Multi-pass membrane protein</topology>
    </subcellularLocation>
</comment>
<comment type="similarity">
    <text evidence="1">Belongs to the fluoride channel Fluc/FEX (TC 1.A.43) family.</text>
</comment>
<sequence length="140" mass="15368">MCLNIFRTFKSYFGCNITFVPKESALVGIGGCIGSVARYQINEWIPSLLGTFIVNVLGCIAIGFLMYESIYFGAFSRNSRLFLGAGLIGSFTTFSAFATQTIEAGLFYGIIFIAANILCGLMGVFIGRQIILRGRRSWNI</sequence>
<keyword id="KW-1003">Cell membrane</keyword>
<keyword id="KW-0407">Ion channel</keyword>
<keyword id="KW-0406">Ion transport</keyword>
<keyword id="KW-0472">Membrane</keyword>
<keyword id="KW-0479">Metal-binding</keyword>
<keyword id="KW-1185">Reference proteome</keyword>
<keyword id="KW-0915">Sodium</keyword>
<keyword id="KW-0812">Transmembrane</keyword>
<keyword id="KW-1133">Transmembrane helix</keyword>
<keyword id="KW-0813">Transport</keyword>
<dbReference type="EMBL" id="CP000254">
    <property type="protein sequence ID" value="ABD40847.1"/>
    <property type="molecule type" value="Genomic_DNA"/>
</dbReference>
<dbReference type="RefSeq" id="WP_011448125.1">
    <property type="nucleotide sequence ID" value="NC_007796.1"/>
</dbReference>
<dbReference type="SMR" id="Q2FLB8"/>
<dbReference type="STRING" id="323259.Mhun_1098"/>
<dbReference type="EnsemblBacteria" id="ABD40847">
    <property type="protein sequence ID" value="ABD40847"/>
    <property type="gene ID" value="Mhun_1098"/>
</dbReference>
<dbReference type="GeneID" id="3922238"/>
<dbReference type="KEGG" id="mhu:Mhun_1098"/>
<dbReference type="eggNOG" id="arCOG04701">
    <property type="taxonomic scope" value="Archaea"/>
</dbReference>
<dbReference type="HOGENOM" id="CLU_114342_1_4_2"/>
<dbReference type="InParanoid" id="Q2FLB8"/>
<dbReference type="OrthoDB" id="253428at2157"/>
<dbReference type="Proteomes" id="UP000001941">
    <property type="component" value="Chromosome"/>
</dbReference>
<dbReference type="GO" id="GO:0005886">
    <property type="term" value="C:plasma membrane"/>
    <property type="evidence" value="ECO:0007669"/>
    <property type="project" value="UniProtKB-SubCell"/>
</dbReference>
<dbReference type="GO" id="GO:0062054">
    <property type="term" value="F:fluoride channel activity"/>
    <property type="evidence" value="ECO:0007669"/>
    <property type="project" value="UniProtKB-UniRule"/>
</dbReference>
<dbReference type="GO" id="GO:0046872">
    <property type="term" value="F:metal ion binding"/>
    <property type="evidence" value="ECO:0007669"/>
    <property type="project" value="UniProtKB-KW"/>
</dbReference>
<dbReference type="GO" id="GO:0140114">
    <property type="term" value="P:cellular detoxification of fluoride"/>
    <property type="evidence" value="ECO:0007669"/>
    <property type="project" value="UniProtKB-UniRule"/>
</dbReference>
<dbReference type="HAMAP" id="MF_00454">
    <property type="entry name" value="FluC"/>
    <property type="match status" value="1"/>
</dbReference>
<dbReference type="InterPro" id="IPR003691">
    <property type="entry name" value="FluC"/>
</dbReference>
<dbReference type="Pfam" id="PF02537">
    <property type="entry name" value="CRCB"/>
    <property type="match status" value="1"/>
</dbReference>
<protein>
    <recommendedName>
        <fullName evidence="1">Fluoride-specific ion channel FluC 1</fullName>
    </recommendedName>
</protein>
<gene>
    <name evidence="1" type="primary">fluC1</name>
    <name evidence="1" type="synonym">crcB1</name>
    <name type="ordered locus">Mhun_1098</name>
</gene>
<evidence type="ECO:0000255" key="1">
    <source>
        <dbReference type="HAMAP-Rule" id="MF_00454"/>
    </source>
</evidence>